<comment type="function">
    <text evidence="1">Serine/threonine protein kinase that acts as a key mediator of the nitric oxide (NO)/cGMP signaling pathway. GMP binding activates PRKG1, which phosphorylates serines and threonines on many cellular proteins. Numerous protein targets for PRKG1 phosphorylation are implicated in modulating cellular calcium, but the contribution of each of these targets may vary substantially among cell types. Proteins that are phosphorylated by PRKG1 regulate platelet activation and adhesion, smooth muscle contraction, cardiac function, gene expression, feedback of the NO-signaling pathway, and other processes involved in several aspects of the CNS like axon guidance, hippocampal and cerebellar learning, circadian rhythm and nociception. Smooth muscle relaxation is mediated through lowering of intracellular free calcium, by desensitization of contractile proteins to calcium, and by decrease in the contractile state of smooth muscle or in platelet activation. Regulates intracellular calcium levels via several pathways: phosphorylates IRAG1 and inhibits IP3-induced Ca(2+) release from intracellular stores, phosphorylation of KCNMA1 (BKCa) channels decreases intracellular Ca(2+) levels, which leads to increased opening of this channel. PRKG1 phosphorylates the canonical transient receptor potential channel (TRPC) family which inactivates the associated inward calcium current. Another mode of action of NO/cGMP/PKGI signaling involves PKGI-mediated inactivation of the Ras homolog gene family member A (RhoA). Phosphorylation of RHOA by PRKG1 blocks the action of this protein in myriad processes: regulation of RHOA translocation; decreasing contraction; controlling vesicle trafficking, reduction of myosin light chain phosphorylation resulting in vasorelaxation. Activation of PRKG1 by NO signaling also alters gene expression in a number of tissues. In smooth muscle cells, increased cGMP and PRKG1 activity influence expression of smooth muscle-specific contractile proteins, levels of proteins in the NO/cGMP signaling pathway, down-regulation of the matrix proteins osteopontin and thrombospondin-1 to limit smooth muscle cell migration and phenotype. Regulates vasodilator-stimulated phosphoprotein (VASP) functions in platelets and smooth muscle (By similarity).</text>
</comment>
<comment type="catalytic activity">
    <reaction>
        <text>L-seryl-[protein] + ATP = O-phospho-L-seryl-[protein] + ADP + H(+)</text>
        <dbReference type="Rhea" id="RHEA:17989"/>
        <dbReference type="Rhea" id="RHEA-COMP:9863"/>
        <dbReference type="Rhea" id="RHEA-COMP:11604"/>
        <dbReference type="ChEBI" id="CHEBI:15378"/>
        <dbReference type="ChEBI" id="CHEBI:29999"/>
        <dbReference type="ChEBI" id="CHEBI:30616"/>
        <dbReference type="ChEBI" id="CHEBI:83421"/>
        <dbReference type="ChEBI" id="CHEBI:456216"/>
        <dbReference type="EC" id="2.7.11.12"/>
    </reaction>
</comment>
<comment type="catalytic activity">
    <reaction>
        <text>L-threonyl-[protein] + ATP = O-phospho-L-threonyl-[protein] + ADP + H(+)</text>
        <dbReference type="Rhea" id="RHEA:46608"/>
        <dbReference type="Rhea" id="RHEA-COMP:11060"/>
        <dbReference type="Rhea" id="RHEA-COMP:11605"/>
        <dbReference type="ChEBI" id="CHEBI:15378"/>
        <dbReference type="ChEBI" id="CHEBI:30013"/>
        <dbReference type="ChEBI" id="CHEBI:30616"/>
        <dbReference type="ChEBI" id="CHEBI:61977"/>
        <dbReference type="ChEBI" id="CHEBI:456216"/>
        <dbReference type="EC" id="2.7.11.12"/>
    </reaction>
</comment>
<comment type="activity regulation">
    <text evidence="1">In the absence of cGMP, PRKG1 activity is suppressed by autoinhibitory contacts.</text>
</comment>
<comment type="subunit">
    <text evidence="1">Isoform alpha: parallel homodimer or heterodimer and also heterotetramer. Interacts directly with PPP1R12A. Non-covalent dimer of dimer of PRKG1-PRKG1 and PPP1R12A-PPP1R12A. This interaction targets PRKG1 to stress fibers to mediate smooth muscle cell relaxation and vasodilation in responses to rises in cGMP (By similarity). Isoform beta: antiparallel homodimer. Part of cGMP kinase signaling complex at least composed of ACTA2/alpha-actin, CNN1/calponin H1, PLN/phospholamban, PRKG1 and ITPR1. Interacts with IRAG1 (By similarity). Forms a stable complex with ITPR1, IRAG1, and isoform beta of PRKG1 (By similarity). Interacts with TRPC7 (via ankyrin repeat domain) (By similarity). Isoform alpha interacts with RGS2 (By similarity). Interacts with GTF2I (By similarity).</text>
</comment>
<comment type="interaction">
    <interactant intactId="EBI-10094497">
        <id>P00516-1</id>
    </interactant>
    <interactant intactId="EBI-10094497">
        <id>P00516-1</id>
        <label>PRKG1</label>
    </interactant>
    <organismsDiffer>false</organismsDiffer>
    <experiments>2</experiments>
</comment>
<comment type="subcellular location">
    <subcellularLocation>
        <location evidence="1">Cytoplasm</location>
    </subcellularLocation>
    <text evidence="1">Colocalized with TRPC7 in the plasma membrane.</text>
</comment>
<comment type="alternative products">
    <event type="alternative splicing"/>
    <isoform>
        <id>P00516-1</id>
        <name>Alpha</name>
        <name>CGK1-alpha</name>
        <sequence type="displayed"/>
    </isoform>
    <isoform>
        <id>P00516-2</id>
        <id>P21136-1</id>
        <name>Beta</name>
        <name>CGK1-beta</name>
        <sequence type="described" ref="VSP_038713"/>
    </isoform>
</comment>
<comment type="tissue specificity">
    <text evidence="8">High concentrations are detected in various smooth muscle: lung, rumen, trachea, aorta, uterus and stomach. Isoform alpha is expressed predominantly in heart, cerebellum and lung, whereas the beta isoform is expressed in high concentrations in trachea, aorta, stomach and uterus.</text>
</comment>
<comment type="domain">
    <text>Composed of an N-terminal leucine-zipper domain followed by an autoinhibitory domain, which mediate homodimer formation and inhibit kinase activity, respectively. Next, two cGMP-binding domains are followed by the catalytic domain at the C-terminus. Binding of cGMP to cGMP-binding domains results in a conformational change that activates kinase activity by removing the autoinhibitory domain from the catalytic cleft leaving the catalytic domain free to phosphorylate downstream substrates. Isoforms alpha and beta have identical cGMP-binding and catalytic domains but differ in their leucine zipper and autoinhibitory sequences and therefore differ in their dimerization substrates and kinase enzyme activity.</text>
</comment>
<comment type="domain">
    <text evidence="1">Heterotetramerization is mediated by the interaction between a coiled-coil of PRKG1 and the leucine/isoleucine zipper of PPP1R12A/MBS, the myosin-binding subunit of the myosin phosphatase.</text>
</comment>
<comment type="PTM">
    <text evidence="1">Autophosphorylation increases kinase activity.</text>
</comment>
<comment type="PTM">
    <text>65 kDa monomer is produced by proteolytic cleavage.</text>
</comment>
<comment type="similarity">
    <text evidence="14">Belongs to the protein kinase superfamily. AGC Ser/Thr protein kinase family. cGMP subfamily.</text>
</comment>
<accession>P00516</accession>
<accession>P21136</accession>
<reference key="1">
    <citation type="journal article" date="1989" name="FEBS Lett.">
        <title>The cDNA of the two isoforms of bovine cGMP-dependent protein kinase.</title>
        <authorList>
            <person name="Wernet W."/>
            <person name="Flockerzi V."/>
            <person name="Hofmann F."/>
        </authorList>
    </citation>
    <scope>NUCLEOTIDE SEQUENCE [MRNA] (ISOFORMS ALPHA AND BETA)</scope>
</reference>
<reference key="2">
    <citation type="journal article" date="1997" name="J. Biol. Chem.">
        <title>Identification of the amino acid sequences responsible for high affinity activation of cGMP kinase Ialpha.</title>
        <authorList>
            <person name="Ruth P."/>
            <person name="Pfeifer A."/>
            <person name="Kamm S."/>
            <person name="Klatt P."/>
            <person name="Dostmann W.R."/>
            <person name="Hofmann F."/>
        </authorList>
    </citation>
    <scope>NUCLEOTIDE SEQUENCE [MRNA] (ISOFORM BETA)</scope>
    <source>
        <tissue>Testis</tissue>
    </source>
</reference>
<reference key="3">
    <citation type="journal article" date="1984" name="Biochemistry">
        <title>Guanosine cyclic 3',5'-phosphate dependent protein kinase, a chimeric protein homologous with two separate protein families.</title>
        <authorList>
            <person name="Takio K."/>
            <person name="Wade R.D."/>
            <person name="Smith S.B."/>
            <person name="Krebs E.G."/>
            <person name="Walsh K.A."/>
            <person name="Titani K."/>
        </authorList>
    </citation>
    <scope>PROTEIN SEQUENCE OF 2-18; 90-375 AND 408-671</scope>
    <scope>ACETYLATION AT SER-2</scope>
</reference>
<reference key="4">
    <citation type="journal article" date="1983" name="J. Biol. Chem.">
        <title>Amino acid sequence around a 'hinge' region and its 'autophosphorylation' site in bovine lung cGMP-dependent protein kinase.</title>
        <authorList>
            <person name="Takio K."/>
            <person name="Smith S.B."/>
            <person name="Walsh K.A."/>
            <person name="Krebs E.G."/>
            <person name="Titani K."/>
        </authorList>
    </citation>
    <scope>PROTEIN SEQUENCE OF 14-105 (ISOFORM ALPHA)</scope>
    <scope>PHOSPHORYLATION AT THR-59</scope>
    <scope>BLOCKAGE OF N-TERMINUS</scope>
    <source>
        <tissue>Lung</tissue>
    </source>
</reference>
<reference key="5">
    <citation type="journal article" date="1989" name="J. Biol. Chem.">
        <title>Properties of a cGMP-dependent monomeric protein kinase from bovine aorta.</title>
        <authorList>
            <person name="Wolfe L."/>
            <person name="Francis S.H."/>
            <person name="Corbin J.D."/>
        </authorList>
    </citation>
    <scope>PROTEIN SEQUENCE OF 63-75 (ISOFORM BETA)</scope>
    <source>
        <tissue>Aorta</tissue>
    </source>
</reference>
<reference key="6">
    <citation type="journal article" date="1982" name="J. Biol. Chem.">
        <title>Amino acid sequence at the ATP-binding site of cGMP-dependent protein kinase.</title>
        <authorList>
            <person name="Hashimoto E."/>
            <person name="Takio K."/>
            <person name="Krebs E.G."/>
        </authorList>
    </citation>
    <scope>PROTEIN SEQUENCE OF 374-410</scope>
    <scope>ATP-BINDING AT LYS-390</scope>
</reference>
<reference key="7">
    <citation type="journal article" date="1987" name="Eur. J. Biochem.">
        <title>A catalytically active fragment of cGMP-dependent protein kinase. Occupation of its cGMP-binding sites does not affect its phosphotransferase activity.</title>
        <authorList>
            <person name="Heil W.G."/>
            <person name="Landgraf W."/>
            <person name="Hofmann F."/>
        </authorList>
    </citation>
    <scope>PROTEIN SEQUENCE OF 79-82 (ISOFORM ALPHA)</scope>
    <scope>CHARACTERIZATION</scope>
</reference>
<reference key="8">
    <citation type="journal article" date="1992" name="Eur. J. Biochem.">
        <title>Detection of cGMP dependent protein kinase isozymes by specific antibodies.</title>
        <authorList>
            <person name="Keilbach A."/>
            <person name="Ruth P."/>
            <person name="Hofmann F."/>
        </authorList>
    </citation>
    <scope>TISSUE SPECIFICITY</scope>
</reference>
<reference key="9">
    <citation type="journal article" date="2000" name="Nature">
        <title>Regulation of intracellular calcium by a signalling complex of IRAG, IP3 receptor and cGMP kinase Ibeta.</title>
        <authorList>
            <person name="Schlossmann J."/>
            <person name="Ammendola A."/>
            <person name="Ashman K."/>
            <person name="Zong X."/>
            <person name="Huber A."/>
            <person name="Neubauer G."/>
            <person name="Wang G.-X."/>
            <person name="Allescher H.-D."/>
            <person name="Korth M."/>
            <person name="Wilm M."/>
            <person name="Hofmann F."/>
            <person name="Ruth P."/>
        </authorList>
    </citation>
    <scope>INTERACTION WITH IRAG1</scope>
</reference>
<reference key="10">
    <citation type="journal article" date="2001" name="J. Biol. Chem.">
        <title>Molecular determinants of the interaction between the inositol 1,4,5-trisphosphate receptor-associated cGMP kinase substrate (IRAG) and cGMP kinase Ibeta.</title>
        <authorList>
            <person name="Ammendola A."/>
            <person name="Geiselhoeringer A."/>
            <person name="Hofmann F."/>
            <person name="Schlossmann J."/>
        </authorList>
    </citation>
    <scope>INTERACTION WITH IRAG1</scope>
</reference>
<reference key="11">
    <citation type="journal article" date="2003" name="Biochem. Biophys. Res. Commun.">
        <title>Association of phospholamban with a cGMP kinase signaling complex.</title>
        <authorList>
            <person name="Koller A."/>
            <person name="Schlossmann J."/>
            <person name="Ashman K."/>
            <person name="Uttenweiler-Joseph S."/>
            <person name="Ruth P."/>
            <person name="Hofmann F."/>
        </authorList>
    </citation>
    <scope>SUBUNIT</scope>
</reference>
<reference key="12">
    <citation type="journal article" date="2005" name="J. Biol. Chem.">
        <title>Identification of the interface between cGMP-dependent protein kinase Ibeta and its interaction partners TFII-I and IRAG reveals a common interaction motif.</title>
        <authorList>
            <person name="Casteel D.E."/>
            <person name="Boss G.R."/>
            <person name="Pilz R.B."/>
        </authorList>
    </citation>
    <scope>INTERACTION WITH IRAG1</scope>
</reference>
<reference key="13">
    <citation type="journal article" date="2011" name="Structure">
        <title>Crystal structure of cGMP-dependent protein kinase reveals novel site of interchain communication.</title>
        <authorList>
            <person name="Osborne B.W."/>
            <person name="Wu J."/>
            <person name="McFarland C.J."/>
            <person name="Nickl C.K."/>
            <person name="Sankaran B."/>
            <person name="Casteel D.E."/>
            <person name="Woods V.L. Jr."/>
            <person name="Kornev A.P."/>
            <person name="Taylor S.S."/>
            <person name="Dostmann W.R."/>
        </authorList>
    </citation>
    <scope>X-RAY CRYSTALLOGRAPHY (2.50 ANGSTROMS) OF 79-356 IN COMPLEX WITH CAMP</scope>
</reference>
<keyword id="KW-0002">3D-structure</keyword>
<keyword id="KW-0007">Acetylation</keyword>
<keyword id="KW-0021">Allosteric enzyme</keyword>
<keyword id="KW-0025">Alternative splicing</keyword>
<keyword id="KW-0067">ATP-binding</keyword>
<keyword id="KW-0140">cGMP</keyword>
<keyword id="KW-0142">cGMP-binding</keyword>
<keyword id="KW-0175">Coiled coil</keyword>
<keyword id="KW-0963">Cytoplasm</keyword>
<keyword id="KW-0903">Direct protein sequencing</keyword>
<keyword id="KW-1015">Disulfide bond</keyword>
<keyword id="KW-0418">Kinase</keyword>
<keyword id="KW-0547">Nucleotide-binding</keyword>
<keyword id="KW-0597">Phosphoprotein</keyword>
<keyword id="KW-1185">Reference proteome</keyword>
<keyword id="KW-0723">Serine/threonine-protein kinase</keyword>
<keyword id="KW-0808">Transferase</keyword>
<sequence length="671" mass="76419">MSELEEDFAKILMLKEERIKELEKRLSEKEEEIQELKRKLHKCQSVLPVPSTHIGPRTTRAQGISAEPQTYRSFHDLRQAFRKFTKSERSKDLIKEAILDNDFMKNLELSQIQEIVDCMYPVEYGKDSCIIKEGDVGSLVYVMEDGKVEVTKEGVKLCTMGPGKVFGELAILYNCTRTATVKTLVNVKLWAIDRQCFQTIMMRTGLIKHTEYMEFLKSVPTFQSLPEEILSKLADVLEETHYENGEYIIRQGARGDTFFIISKGKVNVTREDSPNEDPVFLRTLGKGDWFGEKALQGEDVRTANVIAAEAVTCLVIDRDSFKHLIGGLDDVSNKAYEDAEAKAKYEAEAAFFANLKLSDFNIIDTLGVGGFGRVELVQLKSEESKTFAMKILKKRHIVDTRQQEHIRSEKQIMQGAHSDFIVRLYRTFKDSKYLYMLMEACLGGELWTILRDRGSFEDSTTRFYTACVVEAFAYLHSKGIIYRDLKPENLILDHRGYAKLVDFGFAKKIGFGKKTWTFCGTPEYVAPEIILNKGHDISADYWSLGILMYELLTGSPPFSGPDPMKTYNIILRGIDMIEFPKKIAKNAANLIKKLCRDNPSERLGNLKNGVKDIQKHKWFEGFNWEGLRKGTLTPPIIPSVASPTDTSNFDSFPEDNDEPPPDDNSGWDIDF</sequence>
<feature type="initiator methionine" description="Removed" evidence="10">
    <location>
        <position position="1"/>
    </location>
</feature>
<feature type="chain" id="PRO_0000086114" description="cGMP-dependent protein kinase 1">
    <location>
        <begin position="2"/>
        <end position="671"/>
    </location>
</feature>
<feature type="domain" description="Protein kinase" evidence="4">
    <location>
        <begin position="360"/>
        <end position="619"/>
    </location>
</feature>
<feature type="domain" description="AGC-kinase C-terminal" evidence="5">
    <location>
        <begin position="620"/>
        <end position="671"/>
    </location>
</feature>
<feature type="region of interest" description="Required for dimerization">
    <location>
        <begin position="2"/>
        <end position="102"/>
    </location>
</feature>
<feature type="region of interest" description="Leucine-zipper">
    <location>
        <begin position="9"/>
        <end position="44"/>
    </location>
</feature>
<feature type="region of interest" description="Autoinhibitory domain" evidence="1">
    <location>
        <begin position="50"/>
        <end position="75"/>
    </location>
</feature>
<feature type="region of interest" description="cGMP-binding, high affinity" evidence="1">
    <location>
        <begin position="103"/>
        <end position="220"/>
    </location>
</feature>
<feature type="region of interest" description="cGMP-binding, low affinity" evidence="1">
    <location>
        <begin position="221"/>
        <end position="341"/>
    </location>
</feature>
<feature type="region of interest" description="Disordered" evidence="7">
    <location>
        <begin position="635"/>
        <end position="671"/>
    </location>
</feature>
<feature type="coiled-coil region" evidence="1">
    <location>
        <begin position="2"/>
        <end position="59"/>
    </location>
</feature>
<feature type="compositionally biased region" description="Acidic residues" evidence="7">
    <location>
        <begin position="652"/>
        <end position="661"/>
    </location>
</feature>
<feature type="active site" description="Proton acceptor" evidence="4 6">
    <location>
        <position position="484"/>
    </location>
</feature>
<feature type="binding site" evidence="9 15">
    <location>
        <begin position="167"/>
        <end position="170"/>
    </location>
    <ligand>
        <name>3',5'-cyclic AMP</name>
        <dbReference type="ChEBI" id="CHEBI:58165"/>
    </ligand>
</feature>
<feature type="binding site" evidence="3">
    <location>
        <begin position="167"/>
        <end position="170"/>
    </location>
    <ligand>
        <name>3',5'-cyclic GMP</name>
        <dbReference type="ChEBI" id="CHEBI:57746"/>
        <label>1</label>
    </ligand>
</feature>
<feature type="binding site" evidence="9 15">
    <location>
        <begin position="177"/>
        <end position="178"/>
    </location>
    <ligand>
        <name>3',5'-cyclic AMP</name>
        <dbReference type="ChEBI" id="CHEBI:58165"/>
    </ligand>
</feature>
<feature type="binding site" evidence="3">
    <location>
        <begin position="177"/>
        <end position="178"/>
    </location>
    <ligand>
        <name>3',5'-cyclic GMP</name>
        <dbReference type="ChEBI" id="CHEBI:57746"/>
        <label>1</label>
    </ligand>
</feature>
<feature type="binding site" evidence="3">
    <location>
        <position position="282"/>
    </location>
    <ligand>
        <name>3',5'-cyclic GMP</name>
        <dbReference type="ChEBI" id="CHEBI:57746"/>
        <label>2</label>
    </ligand>
</feature>
<feature type="binding site" evidence="3">
    <location>
        <begin position="291"/>
        <end position="294"/>
    </location>
    <ligand>
        <name>3',5'-cyclic GMP</name>
        <dbReference type="ChEBI" id="CHEBI:57746"/>
        <label>2</label>
    </ligand>
</feature>
<feature type="binding site" evidence="3">
    <location>
        <begin position="301"/>
        <end position="302"/>
    </location>
    <ligand>
        <name>3',5'-cyclic GMP</name>
        <dbReference type="ChEBI" id="CHEBI:57746"/>
        <label>2</label>
    </ligand>
</feature>
<feature type="binding site" evidence="3">
    <location>
        <position position="336"/>
    </location>
    <ligand>
        <name>3',5'-cyclic GMP</name>
        <dbReference type="ChEBI" id="CHEBI:57746"/>
        <label>2</label>
    </ligand>
</feature>
<feature type="binding site" evidence="4">
    <location>
        <begin position="366"/>
        <end position="374"/>
    </location>
    <ligand>
        <name>ATP</name>
        <dbReference type="ChEBI" id="CHEBI:30616"/>
    </ligand>
</feature>
<feature type="binding site">
    <location>
        <position position="390"/>
    </location>
    <ligand>
        <name>ATP</name>
        <dbReference type="ChEBI" id="CHEBI:30616"/>
    </ligand>
</feature>
<feature type="site" description="Cleavage">
    <location>
        <begin position="78"/>
        <end position="79"/>
    </location>
</feature>
<feature type="modified residue" description="N-acetylserine" evidence="10">
    <location>
        <position position="2"/>
    </location>
</feature>
<feature type="modified residue" description="Phosphothreonine; by autocatalysis" evidence="11">
    <location>
        <position position="59"/>
    </location>
</feature>
<feature type="modified residue" description="Phosphothreonine" evidence="2">
    <location>
        <position position="515"/>
    </location>
</feature>
<feature type="disulfide bond" description="Interchain">
    <location>
        <position position="43"/>
    </location>
</feature>
<feature type="splice variant" id="VSP_038713" description="In isoform Beta." evidence="12 13">
    <original>MSELEEDFAKILMLKEERIKELEKRLSEKEEEIQELKRKLHKCQSVLPVPSTHIGPRTTRAQGISAEPQTYRSFHDLRQAFRKFTKSER</original>
    <variation>MGTLRDLQYALQEKIEELRQRDALIDELELELDQKDELIQKLQNELDKYRSVIRPATQQAQKQSASTLQGEPRTKRQAISAEPTAFDIQDLSHVTLPFYPKSPQ</variation>
    <location>
        <begin position="1"/>
        <end position="89"/>
    </location>
</feature>
<feature type="helix" evidence="16">
    <location>
        <begin position="88"/>
        <end position="99"/>
    </location>
</feature>
<feature type="turn" evidence="16">
    <location>
        <begin position="102"/>
        <end position="106"/>
    </location>
</feature>
<feature type="helix" evidence="16">
    <location>
        <begin position="109"/>
        <end position="118"/>
    </location>
</feature>
<feature type="strand" evidence="16">
    <location>
        <begin position="120"/>
        <end position="124"/>
    </location>
</feature>
<feature type="strand" evidence="16">
    <location>
        <begin position="129"/>
        <end position="131"/>
    </location>
</feature>
<feature type="strand" evidence="16">
    <location>
        <begin position="140"/>
        <end position="146"/>
    </location>
</feature>
<feature type="strand" evidence="16">
    <location>
        <begin position="148"/>
        <end position="152"/>
    </location>
</feature>
<feature type="strand" evidence="16">
    <location>
        <begin position="155"/>
        <end position="160"/>
    </location>
</feature>
<feature type="strand" evidence="16">
    <location>
        <begin position="165"/>
        <end position="167"/>
    </location>
</feature>
<feature type="helix" evidence="16">
    <location>
        <begin position="170"/>
        <end position="172"/>
    </location>
</feature>
<feature type="turn" evidence="16">
    <location>
        <begin position="173"/>
        <end position="175"/>
    </location>
</feature>
<feature type="strand" evidence="16">
    <location>
        <begin position="179"/>
        <end position="185"/>
    </location>
</feature>
<feature type="strand" evidence="16">
    <location>
        <begin position="187"/>
        <end position="192"/>
    </location>
</feature>
<feature type="helix" evidence="16">
    <location>
        <begin position="194"/>
        <end position="216"/>
    </location>
</feature>
<feature type="helix" evidence="16">
    <location>
        <begin position="220"/>
        <end position="224"/>
    </location>
</feature>
<feature type="helix" evidence="16">
    <location>
        <begin position="227"/>
        <end position="233"/>
    </location>
</feature>
<feature type="turn" evidence="16">
    <location>
        <begin position="234"/>
        <end position="236"/>
    </location>
</feature>
<feature type="strand" evidence="16">
    <location>
        <begin position="238"/>
        <end position="242"/>
    </location>
</feature>
<feature type="strand" evidence="16">
    <location>
        <begin position="247"/>
        <end position="249"/>
    </location>
</feature>
<feature type="strand" evidence="16">
    <location>
        <begin position="257"/>
        <end position="270"/>
    </location>
</feature>
<feature type="strand" evidence="16">
    <location>
        <begin position="273"/>
        <end position="275"/>
    </location>
</feature>
<feature type="strand" evidence="16">
    <location>
        <begin position="279"/>
        <end position="285"/>
    </location>
</feature>
<feature type="helix" evidence="16">
    <location>
        <begin position="292"/>
        <end position="295"/>
    </location>
</feature>
<feature type="strand" evidence="16">
    <location>
        <begin position="296"/>
        <end position="300"/>
    </location>
</feature>
<feature type="strand" evidence="16">
    <location>
        <begin position="302"/>
        <end position="317"/>
    </location>
</feature>
<feature type="helix" evidence="16">
    <location>
        <begin position="318"/>
        <end position="325"/>
    </location>
</feature>
<feature type="helix" evidence="16">
    <location>
        <begin position="333"/>
        <end position="354"/>
    </location>
</feature>
<evidence type="ECO:0000250" key="1"/>
<evidence type="ECO:0000250" key="2">
    <source>
        <dbReference type="UniProtKB" id="P0C605"/>
    </source>
</evidence>
<evidence type="ECO:0000250" key="3">
    <source>
        <dbReference type="UniProtKB" id="Q13976"/>
    </source>
</evidence>
<evidence type="ECO:0000255" key="4">
    <source>
        <dbReference type="PROSITE-ProRule" id="PRU00159"/>
    </source>
</evidence>
<evidence type="ECO:0000255" key="5">
    <source>
        <dbReference type="PROSITE-ProRule" id="PRU00618"/>
    </source>
</evidence>
<evidence type="ECO:0000255" key="6">
    <source>
        <dbReference type="PROSITE-ProRule" id="PRU10027"/>
    </source>
</evidence>
<evidence type="ECO:0000256" key="7">
    <source>
        <dbReference type="SAM" id="MobiDB-lite"/>
    </source>
</evidence>
<evidence type="ECO:0000269" key="8">
    <source>
    </source>
</evidence>
<evidence type="ECO:0000269" key="9">
    <source>
    </source>
</evidence>
<evidence type="ECO:0000269" key="10">
    <source>
    </source>
</evidence>
<evidence type="ECO:0000269" key="11">
    <source>
    </source>
</evidence>
<evidence type="ECO:0000303" key="12">
    <source>
    </source>
</evidence>
<evidence type="ECO:0000303" key="13">
    <source>
    </source>
</evidence>
<evidence type="ECO:0000305" key="14"/>
<evidence type="ECO:0007744" key="15">
    <source>
        <dbReference type="PDB" id="3SHR"/>
    </source>
</evidence>
<evidence type="ECO:0007829" key="16">
    <source>
        <dbReference type="PDB" id="3SHR"/>
    </source>
</evidence>
<gene>
    <name type="primary">PRKG1</name>
    <name type="synonym">PRKG1B</name>
    <name type="synonym">PRKGR1A</name>
    <name type="synonym">PRKGR1B</name>
</gene>
<dbReference type="EC" id="2.7.11.12"/>
<dbReference type="EMBL" id="X16086">
    <property type="protein sequence ID" value="CAA34214.1"/>
    <property type="molecule type" value="mRNA"/>
</dbReference>
<dbReference type="EMBL" id="X54289">
    <property type="protein sequence ID" value="CAA38184.1"/>
    <property type="molecule type" value="mRNA"/>
</dbReference>
<dbReference type="EMBL" id="Y08961">
    <property type="protein sequence ID" value="CAA70155.1"/>
    <property type="molecule type" value="mRNA"/>
</dbReference>
<dbReference type="PIR" id="A00619">
    <property type="entry name" value="OKBOG"/>
</dbReference>
<dbReference type="PIR" id="S05035">
    <property type="entry name" value="S05035"/>
</dbReference>
<dbReference type="RefSeq" id="NP_776861.1">
    <molecule id="P00516-1"/>
    <property type="nucleotide sequence ID" value="NM_174436.2"/>
</dbReference>
<dbReference type="RefSeq" id="XP_005225410.2">
    <molecule id="P00516-2"/>
    <property type="nucleotide sequence ID" value="XM_005225353.4"/>
</dbReference>
<dbReference type="PDB" id="3SHR">
    <property type="method" value="X-ray"/>
    <property type="resolution" value="2.50 A"/>
    <property type="chains" value="A/B=79-356"/>
</dbReference>
<dbReference type="PDBsum" id="3SHR"/>
<dbReference type="BMRB" id="P00516"/>
<dbReference type="SASBDB" id="P00516"/>
<dbReference type="SMR" id="P00516"/>
<dbReference type="BioGRID" id="159293">
    <property type="interactions" value="2"/>
</dbReference>
<dbReference type="CORUM" id="P00516"/>
<dbReference type="DIP" id="DIP-59143N"/>
<dbReference type="FunCoup" id="P00516">
    <property type="interactions" value="1046"/>
</dbReference>
<dbReference type="IntAct" id="P00516">
    <property type="interactions" value="3"/>
</dbReference>
<dbReference type="STRING" id="9913.ENSBTAP00000030518"/>
<dbReference type="BindingDB" id="P00516"/>
<dbReference type="ChEMBL" id="CHEMBL3183"/>
<dbReference type="iPTMnet" id="P00516"/>
<dbReference type="PaxDb" id="9913-ENSBTAP00000030518"/>
<dbReference type="GeneID" id="282004"/>
<dbReference type="KEGG" id="bta:282004"/>
<dbReference type="CTD" id="5592"/>
<dbReference type="VEuPathDB" id="HostDB:ENSBTAG00000018404"/>
<dbReference type="eggNOG" id="KOG0614">
    <property type="taxonomic scope" value="Eukaryota"/>
</dbReference>
<dbReference type="InParanoid" id="P00516"/>
<dbReference type="OMA" id="ESCLADC"/>
<dbReference type="OrthoDB" id="63267at2759"/>
<dbReference type="BRENDA" id="2.7.11.12">
    <property type="organism ID" value="908"/>
</dbReference>
<dbReference type="Reactome" id="R-BTA-392517">
    <property type="pathway name" value="Rap1 signalling"/>
</dbReference>
<dbReference type="Reactome" id="R-BTA-418457">
    <property type="pathway name" value="cGMP effects"/>
</dbReference>
<dbReference type="EvolutionaryTrace" id="P00516"/>
<dbReference type="Proteomes" id="UP000009136">
    <property type="component" value="Chromosome 26"/>
</dbReference>
<dbReference type="Bgee" id="ENSBTAG00000018404">
    <property type="expression patterns" value="Expressed in oocyte and 90 other cell types or tissues"/>
</dbReference>
<dbReference type="GO" id="GO:0005737">
    <property type="term" value="C:cytoplasm"/>
    <property type="evidence" value="ECO:0000250"/>
    <property type="project" value="UniProtKB"/>
</dbReference>
<dbReference type="GO" id="GO:0005829">
    <property type="term" value="C:cytosol"/>
    <property type="evidence" value="ECO:0000304"/>
    <property type="project" value="Reactome"/>
</dbReference>
<dbReference type="GO" id="GO:0005524">
    <property type="term" value="F:ATP binding"/>
    <property type="evidence" value="ECO:0007669"/>
    <property type="project" value="UniProtKB-KW"/>
</dbReference>
<dbReference type="GO" id="GO:0005246">
    <property type="term" value="F:calcium channel regulator activity"/>
    <property type="evidence" value="ECO:0000250"/>
    <property type="project" value="UniProtKB"/>
</dbReference>
<dbReference type="GO" id="GO:0030553">
    <property type="term" value="F:cGMP binding"/>
    <property type="evidence" value="ECO:0007669"/>
    <property type="project" value="UniProtKB-KW"/>
</dbReference>
<dbReference type="GO" id="GO:0004692">
    <property type="term" value="F:cGMP-dependent protein kinase activity"/>
    <property type="evidence" value="ECO:0000250"/>
    <property type="project" value="UniProtKB"/>
</dbReference>
<dbReference type="GO" id="GO:0042802">
    <property type="term" value="F:identical protein binding"/>
    <property type="evidence" value="ECO:0000353"/>
    <property type="project" value="IntAct"/>
</dbReference>
<dbReference type="GO" id="GO:0106310">
    <property type="term" value="F:protein serine kinase activity"/>
    <property type="evidence" value="ECO:0007669"/>
    <property type="project" value="RHEA"/>
</dbReference>
<dbReference type="GO" id="GO:0090331">
    <property type="term" value="P:negative regulation of platelet aggregation"/>
    <property type="evidence" value="ECO:0000250"/>
    <property type="project" value="UniProtKB"/>
</dbReference>
<dbReference type="GO" id="GO:0043087">
    <property type="term" value="P:regulation of GTPase activity"/>
    <property type="evidence" value="ECO:0000250"/>
    <property type="project" value="UniProtKB"/>
</dbReference>
<dbReference type="GO" id="GO:0007165">
    <property type="term" value="P:signal transduction"/>
    <property type="evidence" value="ECO:0000318"/>
    <property type="project" value="GO_Central"/>
</dbReference>
<dbReference type="CDD" id="cd00038">
    <property type="entry name" value="CAP_ED"/>
    <property type="match status" value="2"/>
</dbReference>
<dbReference type="CDD" id="cd12085">
    <property type="entry name" value="DD_cGKI-alpha"/>
    <property type="match status" value="1"/>
</dbReference>
<dbReference type="CDD" id="cd05572">
    <property type="entry name" value="STKc_cGK"/>
    <property type="match status" value="1"/>
</dbReference>
<dbReference type="FunFam" id="3.30.200.20:FF:000005">
    <property type="entry name" value="cAMP-dependent protein kinase catalytic subunit"/>
    <property type="match status" value="1"/>
</dbReference>
<dbReference type="FunFam" id="1.10.510.10:FF:000096">
    <property type="entry name" value="cGMP-dependent protein kinase"/>
    <property type="match status" value="1"/>
</dbReference>
<dbReference type="FunFam" id="2.60.120.10:FF:000035">
    <property type="entry name" value="cGMP-dependent protein kinase"/>
    <property type="match status" value="1"/>
</dbReference>
<dbReference type="FunFam" id="2.60.120.10:FF:000037">
    <property type="entry name" value="cGMP-dependent protein kinase"/>
    <property type="match status" value="1"/>
</dbReference>
<dbReference type="FunFam" id="1.20.5.490:FF:000006">
    <property type="entry name" value="cGMP-dependent protein kinase 1"/>
    <property type="match status" value="1"/>
</dbReference>
<dbReference type="Gene3D" id="2.60.120.10">
    <property type="entry name" value="Jelly Rolls"/>
    <property type="match status" value="2"/>
</dbReference>
<dbReference type="Gene3D" id="3.30.200.20">
    <property type="entry name" value="Phosphorylase Kinase, domain 1"/>
    <property type="match status" value="1"/>
</dbReference>
<dbReference type="Gene3D" id="1.20.5.490">
    <property type="entry name" value="Single helix bin"/>
    <property type="match status" value="1"/>
</dbReference>
<dbReference type="Gene3D" id="1.10.510.10">
    <property type="entry name" value="Transferase(Phosphotransferase) domain 1"/>
    <property type="match status" value="1"/>
</dbReference>
<dbReference type="InterPro" id="IPR000961">
    <property type="entry name" value="AGC-kinase_C"/>
</dbReference>
<dbReference type="InterPro" id="IPR002374">
    <property type="entry name" value="cGMP_dep_kinase"/>
</dbReference>
<dbReference type="InterPro" id="IPR018488">
    <property type="entry name" value="cNMP-bd_CS"/>
</dbReference>
<dbReference type="InterPro" id="IPR000595">
    <property type="entry name" value="cNMP-bd_dom"/>
</dbReference>
<dbReference type="InterPro" id="IPR018490">
    <property type="entry name" value="cNMP-bd_dom_sf"/>
</dbReference>
<dbReference type="InterPro" id="IPR011009">
    <property type="entry name" value="Kinase-like_dom_sf"/>
</dbReference>
<dbReference type="InterPro" id="IPR031831">
    <property type="entry name" value="PKcGMP_CC"/>
</dbReference>
<dbReference type="InterPro" id="IPR000719">
    <property type="entry name" value="Prot_kinase_dom"/>
</dbReference>
<dbReference type="InterPro" id="IPR017441">
    <property type="entry name" value="Protein_kinase_ATP_BS"/>
</dbReference>
<dbReference type="InterPro" id="IPR014710">
    <property type="entry name" value="RmlC-like_jellyroll"/>
</dbReference>
<dbReference type="InterPro" id="IPR008271">
    <property type="entry name" value="Ser/Thr_kinase_AS"/>
</dbReference>
<dbReference type="InterPro" id="IPR035014">
    <property type="entry name" value="STKc_cGK"/>
</dbReference>
<dbReference type="PANTHER" id="PTHR24353:SF68">
    <property type="match status" value="1"/>
</dbReference>
<dbReference type="PANTHER" id="PTHR24353">
    <property type="entry name" value="CYCLIC NUCLEOTIDE-DEPENDENT PROTEIN KINASE"/>
    <property type="match status" value="1"/>
</dbReference>
<dbReference type="Pfam" id="PF00027">
    <property type="entry name" value="cNMP_binding"/>
    <property type="match status" value="2"/>
</dbReference>
<dbReference type="Pfam" id="PF16808">
    <property type="entry name" value="PKcGMP_CC"/>
    <property type="match status" value="1"/>
</dbReference>
<dbReference type="Pfam" id="PF00069">
    <property type="entry name" value="Pkinase"/>
    <property type="match status" value="1"/>
</dbReference>
<dbReference type="PIRSF" id="PIRSF000559">
    <property type="entry name" value="cGMP-dep_kinase"/>
    <property type="match status" value="1"/>
</dbReference>
<dbReference type="PRINTS" id="PR00104">
    <property type="entry name" value="CGMPKINASE"/>
</dbReference>
<dbReference type="SMART" id="SM00100">
    <property type="entry name" value="cNMP"/>
    <property type="match status" value="2"/>
</dbReference>
<dbReference type="SMART" id="SM00133">
    <property type="entry name" value="S_TK_X"/>
    <property type="match status" value="1"/>
</dbReference>
<dbReference type="SMART" id="SM00220">
    <property type="entry name" value="S_TKc"/>
    <property type="match status" value="1"/>
</dbReference>
<dbReference type="SUPFAM" id="SSF51206">
    <property type="entry name" value="cAMP-binding domain-like"/>
    <property type="match status" value="2"/>
</dbReference>
<dbReference type="SUPFAM" id="SSF56112">
    <property type="entry name" value="Protein kinase-like (PK-like)"/>
    <property type="match status" value="1"/>
</dbReference>
<dbReference type="PROSITE" id="PS51285">
    <property type="entry name" value="AGC_KINASE_CTER"/>
    <property type="match status" value="1"/>
</dbReference>
<dbReference type="PROSITE" id="PS00888">
    <property type="entry name" value="CNMP_BINDING_1"/>
    <property type="match status" value="2"/>
</dbReference>
<dbReference type="PROSITE" id="PS00889">
    <property type="entry name" value="CNMP_BINDING_2"/>
    <property type="match status" value="2"/>
</dbReference>
<dbReference type="PROSITE" id="PS50042">
    <property type="entry name" value="CNMP_BINDING_3"/>
    <property type="match status" value="2"/>
</dbReference>
<dbReference type="PROSITE" id="PS00107">
    <property type="entry name" value="PROTEIN_KINASE_ATP"/>
    <property type="match status" value="1"/>
</dbReference>
<dbReference type="PROSITE" id="PS50011">
    <property type="entry name" value="PROTEIN_KINASE_DOM"/>
    <property type="match status" value="1"/>
</dbReference>
<dbReference type="PROSITE" id="PS00108">
    <property type="entry name" value="PROTEIN_KINASE_ST"/>
    <property type="match status" value="1"/>
</dbReference>
<name>KGP1_BOVIN</name>
<proteinExistence type="evidence at protein level"/>
<protein>
    <recommendedName>
        <fullName>cGMP-dependent protein kinase 1</fullName>
        <shortName>cGK 1</shortName>
        <shortName>cGK1</shortName>
        <ecNumber>2.7.11.12</ecNumber>
    </recommendedName>
    <alternativeName>
        <fullName>cGMP-dependent protein kinase I</fullName>
        <shortName>cGKI</shortName>
    </alternativeName>
</protein>
<organism>
    <name type="scientific">Bos taurus</name>
    <name type="common">Bovine</name>
    <dbReference type="NCBI Taxonomy" id="9913"/>
    <lineage>
        <taxon>Eukaryota</taxon>
        <taxon>Metazoa</taxon>
        <taxon>Chordata</taxon>
        <taxon>Craniata</taxon>
        <taxon>Vertebrata</taxon>
        <taxon>Euteleostomi</taxon>
        <taxon>Mammalia</taxon>
        <taxon>Eutheria</taxon>
        <taxon>Laurasiatheria</taxon>
        <taxon>Artiodactyla</taxon>
        <taxon>Ruminantia</taxon>
        <taxon>Pecora</taxon>
        <taxon>Bovidae</taxon>
        <taxon>Bovinae</taxon>
        <taxon>Bos</taxon>
    </lineage>
</organism>